<dbReference type="EMBL" id="Y18900">
    <property type="protein sequence ID" value="CAB65408.1"/>
    <property type="molecule type" value="mRNA"/>
</dbReference>
<dbReference type="SMR" id="Q9U0E6"/>
<dbReference type="GO" id="GO:0005938">
    <property type="term" value="C:cell cortex"/>
    <property type="evidence" value="ECO:0007669"/>
    <property type="project" value="TreeGrafter"/>
</dbReference>
<dbReference type="GO" id="GO:0003785">
    <property type="term" value="F:actin monomer binding"/>
    <property type="evidence" value="ECO:0007669"/>
    <property type="project" value="TreeGrafter"/>
</dbReference>
<dbReference type="GO" id="GO:0051128">
    <property type="term" value="P:regulation of cellular component organization"/>
    <property type="evidence" value="ECO:0007669"/>
    <property type="project" value="UniProtKB-ARBA"/>
</dbReference>
<dbReference type="CDD" id="cd00148">
    <property type="entry name" value="PROF"/>
    <property type="match status" value="1"/>
</dbReference>
<dbReference type="Gene3D" id="3.30.450.30">
    <property type="entry name" value="Dynein light chain 2a, cytoplasmic"/>
    <property type="match status" value="1"/>
</dbReference>
<dbReference type="InterPro" id="IPR048278">
    <property type="entry name" value="PFN"/>
</dbReference>
<dbReference type="InterPro" id="IPR005455">
    <property type="entry name" value="PFN_euk"/>
</dbReference>
<dbReference type="InterPro" id="IPR036140">
    <property type="entry name" value="PFN_sf"/>
</dbReference>
<dbReference type="InterPro" id="IPR027310">
    <property type="entry name" value="Profilin_CS"/>
</dbReference>
<dbReference type="PANTHER" id="PTHR11604">
    <property type="entry name" value="PROFILIN"/>
    <property type="match status" value="1"/>
</dbReference>
<dbReference type="PANTHER" id="PTHR11604:SF10">
    <property type="entry name" value="PROFILIN"/>
    <property type="match status" value="1"/>
</dbReference>
<dbReference type="Pfam" id="PF00235">
    <property type="entry name" value="Profilin"/>
    <property type="match status" value="1"/>
</dbReference>
<dbReference type="PRINTS" id="PR00392">
    <property type="entry name" value="PROFILIN"/>
</dbReference>
<dbReference type="SMART" id="SM00392">
    <property type="entry name" value="PROF"/>
    <property type="match status" value="1"/>
</dbReference>
<dbReference type="SUPFAM" id="SSF55770">
    <property type="entry name" value="Profilin (actin-binding protein)"/>
    <property type="match status" value="1"/>
</dbReference>
<dbReference type="PROSITE" id="PS00414">
    <property type="entry name" value="PROFILIN"/>
    <property type="match status" value="1"/>
</dbReference>
<accession>Q9U0E6</accession>
<proteinExistence type="evidence at transcript level"/>
<feature type="chain" id="PRO_0000199603" description="Profilin">
    <location>
        <begin position="1"/>
        <end position="140"/>
    </location>
</feature>
<protein>
    <recommendedName>
        <fullName>Profilin</fullName>
    </recommendedName>
</protein>
<reference key="1">
    <citation type="journal article" date="1999" name="DNA Cell Biol.">
        <title>Increased gene expression of a cytokine-related molecule and profilin after activation of Suberites domuncula cells with xenogeneic sponge molecule(s).</title>
        <authorList>
            <person name="Mueller W.E.G."/>
            <person name="Perovic S."/>
            <person name="Wilkesman J."/>
            <person name="Kruse M."/>
            <person name="Mueller I.M."/>
            <person name="Batel R."/>
        </authorList>
    </citation>
    <scope>NUCLEOTIDE SEQUENCE [MRNA]</scope>
</reference>
<organism>
    <name type="scientific">Suberites domuncula</name>
    <name type="common">Sponge</name>
    <dbReference type="NCBI Taxonomy" id="55567"/>
    <lineage>
        <taxon>Eukaryota</taxon>
        <taxon>Metazoa</taxon>
        <taxon>Porifera</taxon>
        <taxon>Demospongiae</taxon>
        <taxon>Heteroscleromorpha</taxon>
        <taxon>Suberitida</taxon>
        <taxon>Suberitidae</taxon>
        <taxon>Suberites</taxon>
    </lineage>
</organism>
<evidence type="ECO:0000250" key="1"/>
<evidence type="ECO:0000305" key="2"/>
<comment type="function">
    <text evidence="1">Binds to actin and affects the structure of the cytoskeleton. At high concentrations, profilin prevents the polymerization of actin, whereas it enhances it at low concentrations. By binding to PIP2, it inhibits the formation of IP3 and DG (By similarity).</text>
</comment>
<comment type="subunit">
    <text>Occurs in many kinds of cells as a complex with monomeric actin in a 1:1 ratio.</text>
</comment>
<comment type="similarity">
    <text evidence="2">Belongs to the profilin family.</text>
</comment>
<sequence>MSWDSYLDNLVAQSKDASGTAHVDRCCIIGLDGGAAWTTAGHACALKLQGQEGPNIAKCFKSKDFTAFMSGGVRAEGEKYQFLREEEGKTVLAKKKGNGAITLQASKTAIVLGHCPEGGQQGNTNKAVGVIADYLESLGM</sequence>
<name>PROF_SUBDO</name>